<proteinExistence type="evidence at transcript level"/>
<evidence type="ECO:0000250" key="1"/>
<evidence type="ECO:0000255" key="2"/>
<evidence type="ECO:0000256" key="3">
    <source>
        <dbReference type="SAM" id="MobiDB-lite"/>
    </source>
</evidence>
<evidence type="ECO:0000303" key="4">
    <source>
    </source>
</evidence>
<evidence type="ECO:0000305" key="5"/>
<comment type="function">
    <text evidence="1">High-affinity potassium transporter.</text>
</comment>
<comment type="subcellular location">
    <subcellularLocation>
        <location evidence="5">Membrane</location>
        <topology evidence="5">Multi-pass membrane protein</topology>
    </subcellularLocation>
</comment>
<comment type="alternative products">
    <event type="alternative splicing"/>
    <isoform>
        <id>Q67UC7-1</id>
        <name>1</name>
        <sequence type="displayed"/>
    </isoform>
    <isoform>
        <id>Q67UC7-2</id>
        <name>2</name>
        <sequence type="described" ref="VSP_016304 VSP_016305"/>
    </isoform>
</comment>
<comment type="similarity">
    <text evidence="5">Belongs to the HAK/KUP transporter (TC 2.A.72.3) family.</text>
</comment>
<comment type="sequence caution" evidence="5">
    <conflict type="frameshift">
        <sequence resource="EMBL" id="AK066194"/>
    </conflict>
</comment>
<comment type="sequence caution" evidence="5">
    <conflict type="erroneous gene model prediction">
        <sequence resource="EMBL-CDS" id="CAD20996"/>
    </conflict>
</comment>
<accession>Q67UC7</accession>
<accession>Q0J1D4</accession>
<accession>Q67UC8</accession>
<accession>Q8VXB6</accession>
<reference key="1">
    <citation type="journal article" date="2002" name="Plant Physiol.">
        <title>Inventory and functional characterization of the HAK potassium transporters of rice.</title>
        <authorList>
            <person name="Banuelos M.A."/>
            <person name="Garciadeblas B."/>
            <person name="Cubero B."/>
            <person name="Rodriguez-Navarro A."/>
        </authorList>
    </citation>
    <scope>NUCLEOTIDE SEQUENCE [GENOMIC DNA]</scope>
    <scope>NOMENCLATURE</scope>
    <source>
        <strain>cv. Nipponbare</strain>
    </source>
</reference>
<reference key="2">
    <citation type="journal article" date="2005" name="Nature">
        <title>The map-based sequence of the rice genome.</title>
        <authorList>
            <consortium name="International rice genome sequencing project (IRGSP)"/>
        </authorList>
    </citation>
    <scope>NUCLEOTIDE SEQUENCE [LARGE SCALE GENOMIC DNA]</scope>
    <source>
        <strain>cv. Nipponbare</strain>
    </source>
</reference>
<reference key="3">
    <citation type="journal article" date="2008" name="Nucleic Acids Res.">
        <title>The rice annotation project database (RAP-DB): 2008 update.</title>
        <authorList>
            <consortium name="The rice annotation project (RAP)"/>
        </authorList>
    </citation>
    <scope>GENOME REANNOTATION</scope>
    <source>
        <strain>cv. Nipponbare</strain>
    </source>
</reference>
<reference key="4">
    <citation type="journal article" date="2013" name="Rice">
        <title>Improvement of the Oryza sativa Nipponbare reference genome using next generation sequence and optical map data.</title>
        <authorList>
            <person name="Kawahara Y."/>
            <person name="de la Bastide M."/>
            <person name="Hamilton J.P."/>
            <person name="Kanamori H."/>
            <person name="McCombie W.R."/>
            <person name="Ouyang S."/>
            <person name="Schwartz D.C."/>
            <person name="Tanaka T."/>
            <person name="Wu J."/>
            <person name="Zhou S."/>
            <person name="Childs K.L."/>
            <person name="Davidson R.M."/>
            <person name="Lin H."/>
            <person name="Quesada-Ocampo L."/>
            <person name="Vaillancourt B."/>
            <person name="Sakai H."/>
            <person name="Lee S.S."/>
            <person name="Kim J."/>
            <person name="Numa H."/>
            <person name="Itoh T."/>
            <person name="Buell C.R."/>
            <person name="Matsumoto T."/>
        </authorList>
    </citation>
    <scope>GENOME REANNOTATION</scope>
    <source>
        <strain>cv. Nipponbare</strain>
    </source>
</reference>
<reference key="5">
    <citation type="journal article" date="2005" name="PLoS Biol.">
        <title>The genomes of Oryza sativa: a history of duplications.</title>
        <authorList>
            <person name="Yu J."/>
            <person name="Wang J."/>
            <person name="Lin W."/>
            <person name="Li S."/>
            <person name="Li H."/>
            <person name="Zhou J."/>
            <person name="Ni P."/>
            <person name="Dong W."/>
            <person name="Hu S."/>
            <person name="Zeng C."/>
            <person name="Zhang J."/>
            <person name="Zhang Y."/>
            <person name="Li R."/>
            <person name="Xu Z."/>
            <person name="Li S."/>
            <person name="Li X."/>
            <person name="Zheng H."/>
            <person name="Cong L."/>
            <person name="Lin L."/>
            <person name="Yin J."/>
            <person name="Geng J."/>
            <person name="Li G."/>
            <person name="Shi J."/>
            <person name="Liu J."/>
            <person name="Lv H."/>
            <person name="Li J."/>
            <person name="Wang J."/>
            <person name="Deng Y."/>
            <person name="Ran L."/>
            <person name="Shi X."/>
            <person name="Wang X."/>
            <person name="Wu Q."/>
            <person name="Li C."/>
            <person name="Ren X."/>
            <person name="Wang J."/>
            <person name="Wang X."/>
            <person name="Li D."/>
            <person name="Liu D."/>
            <person name="Zhang X."/>
            <person name="Ji Z."/>
            <person name="Zhao W."/>
            <person name="Sun Y."/>
            <person name="Zhang Z."/>
            <person name="Bao J."/>
            <person name="Han Y."/>
            <person name="Dong L."/>
            <person name="Ji J."/>
            <person name="Chen P."/>
            <person name="Wu S."/>
            <person name="Liu J."/>
            <person name="Xiao Y."/>
            <person name="Bu D."/>
            <person name="Tan J."/>
            <person name="Yang L."/>
            <person name="Ye C."/>
            <person name="Zhang J."/>
            <person name="Xu J."/>
            <person name="Zhou Y."/>
            <person name="Yu Y."/>
            <person name="Zhang B."/>
            <person name="Zhuang S."/>
            <person name="Wei H."/>
            <person name="Liu B."/>
            <person name="Lei M."/>
            <person name="Yu H."/>
            <person name="Li Y."/>
            <person name="Xu H."/>
            <person name="Wei S."/>
            <person name="He X."/>
            <person name="Fang L."/>
            <person name="Zhang Z."/>
            <person name="Zhang Y."/>
            <person name="Huang X."/>
            <person name="Su Z."/>
            <person name="Tong W."/>
            <person name="Li J."/>
            <person name="Tong Z."/>
            <person name="Li S."/>
            <person name="Ye J."/>
            <person name="Wang L."/>
            <person name="Fang L."/>
            <person name="Lei T."/>
            <person name="Chen C.-S."/>
            <person name="Chen H.-C."/>
            <person name="Xu Z."/>
            <person name="Li H."/>
            <person name="Huang H."/>
            <person name="Zhang F."/>
            <person name="Xu H."/>
            <person name="Li N."/>
            <person name="Zhao C."/>
            <person name="Li S."/>
            <person name="Dong L."/>
            <person name="Huang Y."/>
            <person name="Li L."/>
            <person name="Xi Y."/>
            <person name="Qi Q."/>
            <person name="Li W."/>
            <person name="Zhang B."/>
            <person name="Hu W."/>
            <person name="Zhang Y."/>
            <person name="Tian X."/>
            <person name="Jiao Y."/>
            <person name="Liang X."/>
            <person name="Jin J."/>
            <person name="Gao L."/>
            <person name="Zheng W."/>
            <person name="Hao B."/>
            <person name="Liu S.-M."/>
            <person name="Wang W."/>
            <person name="Yuan L."/>
            <person name="Cao M."/>
            <person name="McDermott J."/>
            <person name="Samudrala R."/>
            <person name="Wang J."/>
            <person name="Wong G.K.-S."/>
            <person name="Yang H."/>
        </authorList>
    </citation>
    <scope>NUCLEOTIDE SEQUENCE [LARGE SCALE GENOMIC DNA]</scope>
    <source>
        <strain>cv. Nipponbare</strain>
    </source>
</reference>
<reference key="6">
    <citation type="journal article" date="2003" name="Science">
        <title>Collection, mapping, and annotation of over 28,000 cDNA clones from japonica rice.</title>
        <authorList>
            <consortium name="The rice full-length cDNA consortium"/>
        </authorList>
    </citation>
    <scope>NUCLEOTIDE SEQUENCE [LARGE SCALE MRNA] (ISOFORMS 1 AND 2)</scope>
    <source>
        <strain>cv. Nipponbare</strain>
    </source>
</reference>
<reference key="7">
    <citation type="journal article" date="2009" name="J. Genet. Genomics">
        <title>Molecular evolution and functional divergence of HAK potassium transporter gene family in rice (Oryza sativa L.).</title>
        <authorList>
            <person name="Yang Z."/>
            <person name="Gao Q."/>
            <person name="Sun C."/>
            <person name="Li W."/>
            <person name="Gu S."/>
            <person name="Xu C."/>
        </authorList>
    </citation>
    <scope>GENE FAMILY</scope>
</reference>
<protein>
    <recommendedName>
        <fullName>Probable potassium transporter 17</fullName>
    </recommendedName>
    <alternativeName>
        <fullName>OsHAK17</fullName>
    </alternativeName>
</protein>
<sequence>MDLEAGSIRPRSDGEGGGPAAGRETDDSNVWKDLFLAYKTLGVVFGGLVTSPLYVYPSMNLSSPTEADYLGIYSIMFWTLTLIGVVKYVCIALNADDHGEGGTFAMYSLLCRHADIGILPSKRVYAEEDPLLHSQSAIARRPSRLGKFFEQSITARRVLLFVAVLGMCMLIGDGILTPAISVLSAIDGIRGPFPTVSKPVVEALSAAILIGLFLLQKYGTSKVSFLFSPIMAAWTFTTPIIGLYSIVHYYPGIFKAISPYYIVHFFLRNKRQGWQLLGGTVLCITGAEAMFADLGHFSKKAIQIAFLSSIYPSLVLTYAGQTAYLINNVNDFGDGFYKFVPRPVYWPMFVVATLAAIVASQSLISATFSVIKQSVVLDYFPRVKVVHTSQHKEGEVYSPEINYILMVLCVGVILGFGGGKAIGNAFGVVVIMVMLITTVLLTLVMIIIWRTPLVLAGLYFVPFFIMEGAYVSAVFTKIPEGGWLPFAVSITLAMIMFGWYYGRQRKFEYEMTNKVSLEHLGELLARPEVQRVPGLCFFYSNIQDGLTPILSHYIKNMSSLHTVTIFVTLRSLLVAKVDQSKRILINRLGPNGVYGCTVQYGYADNLSLEGGDDLAAQVTSCLQWHIQMDTDGRRSPEEEMAQLEAARLAGVVHVRGKMRFYVGEDAGWFDKIMLGFYEFLHGICRSALPVLGMPLQQRVEIGMLYKV</sequence>
<name>HAK17_ORYSJ</name>
<keyword id="KW-0025">Alternative splicing</keyword>
<keyword id="KW-0325">Glycoprotein</keyword>
<keyword id="KW-0406">Ion transport</keyword>
<keyword id="KW-0472">Membrane</keyword>
<keyword id="KW-0630">Potassium</keyword>
<keyword id="KW-0633">Potassium transport</keyword>
<keyword id="KW-1185">Reference proteome</keyword>
<keyword id="KW-0812">Transmembrane</keyword>
<keyword id="KW-1133">Transmembrane helix</keyword>
<keyword id="KW-0813">Transport</keyword>
<organism>
    <name type="scientific">Oryza sativa subsp. japonica</name>
    <name type="common">Rice</name>
    <dbReference type="NCBI Taxonomy" id="39947"/>
    <lineage>
        <taxon>Eukaryota</taxon>
        <taxon>Viridiplantae</taxon>
        <taxon>Streptophyta</taxon>
        <taxon>Embryophyta</taxon>
        <taxon>Tracheophyta</taxon>
        <taxon>Spermatophyta</taxon>
        <taxon>Magnoliopsida</taxon>
        <taxon>Liliopsida</taxon>
        <taxon>Poales</taxon>
        <taxon>Poaceae</taxon>
        <taxon>BOP clade</taxon>
        <taxon>Oryzoideae</taxon>
        <taxon>Oryzeae</taxon>
        <taxon>Oryzinae</taxon>
        <taxon>Oryza</taxon>
        <taxon>Oryza sativa</taxon>
    </lineage>
</organism>
<dbReference type="EMBL" id="AJ427975">
    <property type="protein sequence ID" value="CAD20996.1"/>
    <property type="status" value="ALT_SEQ"/>
    <property type="molecule type" value="Genomic_DNA"/>
</dbReference>
<dbReference type="EMBL" id="AP005308">
    <property type="protein sequence ID" value="BAD37951.1"/>
    <property type="molecule type" value="Genomic_DNA"/>
</dbReference>
<dbReference type="EMBL" id="AP005308">
    <property type="protein sequence ID" value="BAD37952.1"/>
    <property type="molecule type" value="Genomic_DNA"/>
</dbReference>
<dbReference type="EMBL" id="AP005575">
    <property type="protein sequence ID" value="BAD38243.1"/>
    <property type="molecule type" value="Genomic_DNA"/>
</dbReference>
<dbReference type="EMBL" id="AP005575">
    <property type="protein sequence ID" value="BAD38244.1"/>
    <property type="molecule type" value="Genomic_DNA"/>
</dbReference>
<dbReference type="EMBL" id="AP008215">
    <property type="protein sequence ID" value="BAF25231.1"/>
    <property type="molecule type" value="Genomic_DNA"/>
</dbReference>
<dbReference type="EMBL" id="AP014965">
    <property type="protein sequence ID" value="BAT08367.1"/>
    <property type="molecule type" value="Genomic_DNA"/>
</dbReference>
<dbReference type="EMBL" id="CM000146">
    <property type="protein sequence ID" value="EEE69825.1"/>
    <property type="molecule type" value="Genomic_DNA"/>
</dbReference>
<dbReference type="EMBL" id="AK066194">
    <property type="status" value="NOT_ANNOTATED_CDS"/>
    <property type="molecule type" value="mRNA"/>
</dbReference>
<dbReference type="EMBL" id="AK068574">
    <property type="protein sequence ID" value="BAG90974.1"/>
    <property type="molecule type" value="mRNA"/>
</dbReference>
<dbReference type="RefSeq" id="XP_015651178.1">
    <property type="nucleotide sequence ID" value="XM_015795692.1"/>
</dbReference>
<dbReference type="RefSeq" id="XP_015651179.1">
    <property type="nucleotide sequence ID" value="XM_015795693.1"/>
</dbReference>
<dbReference type="FunCoup" id="Q67UC7">
    <property type="interactions" value="26"/>
</dbReference>
<dbReference type="STRING" id="39947.Q67UC7"/>
<dbReference type="GlyCosmos" id="Q67UC7">
    <property type="glycosylation" value="1 site, No reported glycans"/>
</dbReference>
<dbReference type="PaxDb" id="39947-Q67UC7"/>
<dbReference type="KEGG" id="dosa:Os09g0448200"/>
<dbReference type="eggNOG" id="ENOG502QPSA">
    <property type="taxonomic scope" value="Eukaryota"/>
</dbReference>
<dbReference type="HOGENOM" id="CLU_008142_2_0_1"/>
<dbReference type="InParanoid" id="Q67UC7"/>
<dbReference type="OrthoDB" id="504708at2759"/>
<dbReference type="Proteomes" id="UP000000763">
    <property type="component" value="Chromosome 9"/>
</dbReference>
<dbReference type="Proteomes" id="UP000007752">
    <property type="component" value="Chromosome 9"/>
</dbReference>
<dbReference type="Proteomes" id="UP000059680">
    <property type="component" value="Chromosome 9"/>
</dbReference>
<dbReference type="GO" id="GO:0016020">
    <property type="term" value="C:membrane"/>
    <property type="evidence" value="ECO:0000318"/>
    <property type="project" value="GO_Central"/>
</dbReference>
<dbReference type="GO" id="GO:0015079">
    <property type="term" value="F:potassium ion transmembrane transporter activity"/>
    <property type="evidence" value="ECO:0000318"/>
    <property type="project" value="GO_Central"/>
</dbReference>
<dbReference type="GO" id="GO:0006813">
    <property type="term" value="P:potassium ion transport"/>
    <property type="evidence" value="ECO:0000318"/>
    <property type="project" value="GO_Central"/>
</dbReference>
<dbReference type="InterPro" id="IPR003855">
    <property type="entry name" value="K+_transporter"/>
</dbReference>
<dbReference type="InterPro" id="IPR053952">
    <property type="entry name" value="K_trans_C"/>
</dbReference>
<dbReference type="InterPro" id="IPR053951">
    <property type="entry name" value="K_trans_N"/>
</dbReference>
<dbReference type="NCBIfam" id="TIGR00794">
    <property type="entry name" value="kup"/>
    <property type="match status" value="1"/>
</dbReference>
<dbReference type="PANTHER" id="PTHR30540">
    <property type="entry name" value="OSMOTIC STRESS POTASSIUM TRANSPORTER"/>
    <property type="match status" value="1"/>
</dbReference>
<dbReference type="PANTHER" id="PTHR30540:SF13">
    <property type="entry name" value="POTASSIUM TRANSPORTER 17-RELATED"/>
    <property type="match status" value="1"/>
</dbReference>
<dbReference type="Pfam" id="PF02705">
    <property type="entry name" value="K_trans"/>
    <property type="match status" value="1"/>
</dbReference>
<dbReference type="Pfam" id="PF22776">
    <property type="entry name" value="K_trans_C"/>
    <property type="match status" value="1"/>
</dbReference>
<feature type="chain" id="PRO_0000209104" description="Probable potassium transporter 17">
    <location>
        <begin position="1"/>
        <end position="707"/>
    </location>
</feature>
<feature type="topological domain" description="Cytoplasmic" evidence="2">
    <location>
        <begin position="1"/>
        <end position="34"/>
    </location>
</feature>
<feature type="transmembrane region" description="Helical; Name=1" evidence="2">
    <location>
        <begin position="35"/>
        <end position="55"/>
    </location>
</feature>
<feature type="topological domain" description="Extracellular" evidence="2">
    <location>
        <begin position="56"/>
        <end position="71"/>
    </location>
</feature>
<feature type="transmembrane region" description="Helical; Name=2" evidence="2">
    <location>
        <begin position="72"/>
        <end position="92"/>
    </location>
</feature>
<feature type="topological domain" description="Cytoplasmic" evidence="2">
    <location>
        <begin position="93"/>
        <end position="157"/>
    </location>
</feature>
<feature type="transmembrane region" description="Helical; Name=3" evidence="2">
    <location>
        <begin position="158"/>
        <end position="178"/>
    </location>
</feature>
<feature type="topological domain" description="Extracellular" evidence="2">
    <location>
        <begin position="179"/>
        <end position="194"/>
    </location>
</feature>
<feature type="transmembrane region" description="Helical; Name=4" evidence="2">
    <location>
        <begin position="195"/>
        <end position="215"/>
    </location>
</feature>
<feature type="topological domain" description="Cytoplasmic" evidence="2">
    <location>
        <begin position="216"/>
        <end position="222"/>
    </location>
</feature>
<feature type="transmembrane region" description="Helical; Name=5" evidence="2">
    <location>
        <begin position="223"/>
        <end position="243"/>
    </location>
</feature>
<feature type="topological domain" description="Extracellular" evidence="2">
    <location>
        <begin position="244"/>
        <end position="276"/>
    </location>
</feature>
<feature type="transmembrane region" description="Helical; Name=6" evidence="2">
    <location>
        <begin position="277"/>
        <end position="297"/>
    </location>
</feature>
<feature type="topological domain" description="Cytoplasmic" evidence="2">
    <location>
        <begin position="298"/>
        <end position="305"/>
    </location>
</feature>
<feature type="transmembrane region" description="Helical; Name=7" evidence="2">
    <location>
        <begin position="306"/>
        <end position="326"/>
    </location>
</feature>
<feature type="topological domain" description="Extracellular" evidence="2">
    <location>
        <begin position="327"/>
        <end position="343"/>
    </location>
</feature>
<feature type="transmembrane region" description="Helical; Name=8" evidence="2">
    <location>
        <begin position="344"/>
        <end position="364"/>
    </location>
</feature>
<feature type="topological domain" description="Cytoplasmic" evidence="2">
    <location>
        <begin position="365"/>
        <end position="402"/>
    </location>
</feature>
<feature type="transmembrane region" description="Helical; Name=9" evidence="2">
    <location>
        <begin position="403"/>
        <end position="423"/>
    </location>
</feature>
<feature type="topological domain" description="Extracellular" evidence="2">
    <location>
        <begin position="424"/>
        <end position="427"/>
    </location>
</feature>
<feature type="transmembrane region" description="Helical; Name=10" evidence="2">
    <location>
        <begin position="428"/>
        <end position="448"/>
    </location>
</feature>
<feature type="topological domain" description="Cytoplasmic" evidence="2">
    <location>
        <begin position="449"/>
        <end position="454"/>
    </location>
</feature>
<feature type="transmembrane region" description="Helical; Name=11" evidence="2">
    <location>
        <begin position="455"/>
        <end position="475"/>
    </location>
</feature>
<feature type="topological domain" description="Extracellular" evidence="2">
    <location>
        <begin position="476"/>
        <end position="480"/>
    </location>
</feature>
<feature type="transmembrane region" description="Helical; Name=12" evidence="2">
    <location>
        <begin position="481"/>
        <end position="501"/>
    </location>
</feature>
<feature type="topological domain" description="Cytoplasmic" evidence="2">
    <location>
        <begin position="502"/>
        <end position="707"/>
    </location>
</feature>
<feature type="region of interest" description="Disordered" evidence="3">
    <location>
        <begin position="1"/>
        <end position="25"/>
    </location>
</feature>
<feature type="glycosylation site" description="N-linked (GlcNAc...) asparagine" evidence="2">
    <location>
        <position position="60"/>
    </location>
</feature>
<feature type="splice variant" id="VSP_016304" description="In isoform 2." evidence="4">
    <location>
        <begin position="1"/>
        <end position="18"/>
    </location>
</feature>
<feature type="splice variant" id="VSP_016305" description="In isoform 2." evidence="4">
    <original>PAAGRETD</original>
    <variation>MFSLNSEQ</variation>
    <location>
        <begin position="19"/>
        <end position="26"/>
    </location>
</feature>
<gene>
    <name type="primary">HAK17</name>
    <name type="ordered locus">Os09g0448200</name>
    <name type="ordered locus">LOC_Os09g27580</name>
    <name type="ORF">OJ1596_C06.35-1</name>
    <name type="ORF">OJ1596_C06.35-2</name>
    <name type="ORF">OsJ_29574</name>
    <name type="ORF">P0047B10.17-1</name>
    <name type="ORF">P0047B10.17-2</name>
</gene>